<protein>
    <recommendedName>
        <fullName evidence="1">Peptide chain release factor 1</fullName>
        <shortName evidence="1">RF-1</shortName>
    </recommendedName>
</protein>
<feature type="chain" id="PRO_1000193495" description="Peptide chain release factor 1">
    <location>
        <begin position="1"/>
        <end position="361"/>
    </location>
</feature>
<feature type="region of interest" description="Disordered" evidence="2">
    <location>
        <begin position="285"/>
        <end position="311"/>
    </location>
</feature>
<feature type="compositionally biased region" description="Basic and acidic residues" evidence="2">
    <location>
        <begin position="285"/>
        <end position="309"/>
    </location>
</feature>
<feature type="modified residue" description="N5-methylglutamine" evidence="1">
    <location>
        <position position="236"/>
    </location>
</feature>
<accession>B7L246</accession>
<sequence>MTPIPSDRLDAILARHDIVTAQLADGSADAGSIVQLSRELSELDGVVAAIHHYRLAEANLAGIRAMIDEPGGDPEMRALAAEEKPEAEEALEQAHRALQLILLPKDAADEKSAILEIRAGTGGDEAALFAGDLFRMYARYAESKGWRVEVISESEGTAGGYREVVAEVKGRSVFSRLKFESGAHRVQRVPDTETQGRIHTSAATVAVLPEAEEVDIVVNEADLKIDTMRAQGAGGQHVNKTESAIRITHIPTGVVVFVQEERSQHKNRARAMSLLRSKLFDAERTAKDSARAADRKAQVGSGDRSERIRTYNFPQGRVTDHRINLTLYKLEEVMAGQALDEVIDALVTEHQAELLAAEGMA</sequence>
<reference key="1">
    <citation type="submission" date="2008-12" db="EMBL/GenBank/DDBJ databases">
        <title>Complete sequence of chromosome of Methylobacterium chloromethanicum CM4.</title>
        <authorList>
            <consortium name="US DOE Joint Genome Institute"/>
            <person name="Lucas S."/>
            <person name="Copeland A."/>
            <person name="Lapidus A."/>
            <person name="Glavina del Rio T."/>
            <person name="Dalin E."/>
            <person name="Tice H."/>
            <person name="Bruce D."/>
            <person name="Goodwin L."/>
            <person name="Pitluck S."/>
            <person name="Chertkov O."/>
            <person name="Brettin T."/>
            <person name="Detter J.C."/>
            <person name="Han C."/>
            <person name="Larimer F."/>
            <person name="Land M."/>
            <person name="Hauser L."/>
            <person name="Kyrpides N."/>
            <person name="Mikhailova N."/>
            <person name="Marx C."/>
            <person name="Richardson P."/>
        </authorList>
    </citation>
    <scope>NUCLEOTIDE SEQUENCE [LARGE SCALE GENOMIC DNA]</scope>
    <source>
        <strain>CM4 / NCIMB 13688</strain>
    </source>
</reference>
<name>RF1_METC4</name>
<keyword id="KW-0963">Cytoplasm</keyword>
<keyword id="KW-0488">Methylation</keyword>
<keyword id="KW-0648">Protein biosynthesis</keyword>
<dbReference type="EMBL" id="CP001298">
    <property type="protein sequence ID" value="ACK81836.1"/>
    <property type="molecule type" value="Genomic_DNA"/>
</dbReference>
<dbReference type="RefSeq" id="WP_003599953.1">
    <property type="nucleotide sequence ID" value="NC_011757.1"/>
</dbReference>
<dbReference type="SMR" id="B7L246"/>
<dbReference type="GeneID" id="72988318"/>
<dbReference type="KEGG" id="mch:Mchl_0918"/>
<dbReference type="HOGENOM" id="CLU_036856_0_1_5"/>
<dbReference type="Proteomes" id="UP000002385">
    <property type="component" value="Chromosome"/>
</dbReference>
<dbReference type="GO" id="GO:0005737">
    <property type="term" value="C:cytoplasm"/>
    <property type="evidence" value="ECO:0007669"/>
    <property type="project" value="UniProtKB-SubCell"/>
</dbReference>
<dbReference type="GO" id="GO:0016149">
    <property type="term" value="F:translation release factor activity, codon specific"/>
    <property type="evidence" value="ECO:0007669"/>
    <property type="project" value="UniProtKB-UniRule"/>
</dbReference>
<dbReference type="FunFam" id="3.30.160.20:FF:000004">
    <property type="entry name" value="Peptide chain release factor 1"/>
    <property type="match status" value="1"/>
</dbReference>
<dbReference type="FunFam" id="3.30.70.1660:FF:000002">
    <property type="entry name" value="Peptide chain release factor 1"/>
    <property type="match status" value="1"/>
</dbReference>
<dbReference type="FunFam" id="3.30.70.1660:FF:000004">
    <property type="entry name" value="Peptide chain release factor 1"/>
    <property type="match status" value="1"/>
</dbReference>
<dbReference type="Gene3D" id="3.30.160.20">
    <property type="match status" value="1"/>
</dbReference>
<dbReference type="Gene3D" id="3.30.70.1660">
    <property type="match status" value="1"/>
</dbReference>
<dbReference type="Gene3D" id="6.10.140.1950">
    <property type="match status" value="1"/>
</dbReference>
<dbReference type="HAMAP" id="MF_00093">
    <property type="entry name" value="Rel_fac_1"/>
    <property type="match status" value="1"/>
</dbReference>
<dbReference type="InterPro" id="IPR005139">
    <property type="entry name" value="PCRF"/>
</dbReference>
<dbReference type="InterPro" id="IPR000352">
    <property type="entry name" value="Pep_chain_release_fac_I"/>
</dbReference>
<dbReference type="InterPro" id="IPR045853">
    <property type="entry name" value="Pep_chain_release_fac_I_sf"/>
</dbReference>
<dbReference type="InterPro" id="IPR050057">
    <property type="entry name" value="Prokaryotic/Mito_RF"/>
</dbReference>
<dbReference type="InterPro" id="IPR004373">
    <property type="entry name" value="RF-1"/>
</dbReference>
<dbReference type="NCBIfam" id="TIGR00019">
    <property type="entry name" value="prfA"/>
    <property type="match status" value="1"/>
</dbReference>
<dbReference type="NCBIfam" id="NF001859">
    <property type="entry name" value="PRK00591.1"/>
    <property type="match status" value="1"/>
</dbReference>
<dbReference type="PANTHER" id="PTHR43804">
    <property type="entry name" value="LD18447P"/>
    <property type="match status" value="1"/>
</dbReference>
<dbReference type="PANTHER" id="PTHR43804:SF7">
    <property type="entry name" value="LD18447P"/>
    <property type="match status" value="1"/>
</dbReference>
<dbReference type="Pfam" id="PF03462">
    <property type="entry name" value="PCRF"/>
    <property type="match status" value="1"/>
</dbReference>
<dbReference type="Pfam" id="PF00472">
    <property type="entry name" value="RF-1"/>
    <property type="match status" value="1"/>
</dbReference>
<dbReference type="SMART" id="SM00937">
    <property type="entry name" value="PCRF"/>
    <property type="match status" value="1"/>
</dbReference>
<dbReference type="SUPFAM" id="SSF75620">
    <property type="entry name" value="Release factor"/>
    <property type="match status" value="1"/>
</dbReference>
<dbReference type="PROSITE" id="PS00745">
    <property type="entry name" value="RF_PROK_I"/>
    <property type="match status" value="1"/>
</dbReference>
<comment type="function">
    <text evidence="1">Peptide chain release factor 1 directs the termination of translation in response to the peptide chain termination codons UAG and UAA.</text>
</comment>
<comment type="subcellular location">
    <subcellularLocation>
        <location evidence="1">Cytoplasm</location>
    </subcellularLocation>
</comment>
<comment type="PTM">
    <text evidence="1">Methylated by PrmC. Methylation increases the termination efficiency of RF1.</text>
</comment>
<comment type="similarity">
    <text evidence="1">Belongs to the prokaryotic/mitochondrial release factor family.</text>
</comment>
<proteinExistence type="inferred from homology"/>
<organism>
    <name type="scientific">Methylorubrum extorquens (strain CM4 / NCIMB 13688)</name>
    <name type="common">Methylobacterium extorquens</name>
    <dbReference type="NCBI Taxonomy" id="440085"/>
    <lineage>
        <taxon>Bacteria</taxon>
        <taxon>Pseudomonadati</taxon>
        <taxon>Pseudomonadota</taxon>
        <taxon>Alphaproteobacteria</taxon>
        <taxon>Hyphomicrobiales</taxon>
        <taxon>Methylobacteriaceae</taxon>
        <taxon>Methylorubrum</taxon>
    </lineage>
</organism>
<gene>
    <name evidence="1" type="primary">prfA</name>
    <name type="ordered locus">Mchl_0918</name>
</gene>
<evidence type="ECO:0000255" key="1">
    <source>
        <dbReference type="HAMAP-Rule" id="MF_00093"/>
    </source>
</evidence>
<evidence type="ECO:0000256" key="2">
    <source>
        <dbReference type="SAM" id="MobiDB-lite"/>
    </source>
</evidence>